<name>KATG_YERPG</name>
<proteinExistence type="inferred from homology"/>
<reference key="1">
    <citation type="journal article" date="2010" name="J. Bacteriol.">
        <title>Genome sequence of the deep-rooted Yersinia pestis strain Angola reveals new insights into the evolution and pangenome of the plague bacterium.</title>
        <authorList>
            <person name="Eppinger M."/>
            <person name="Worsham P.L."/>
            <person name="Nikolich M.P."/>
            <person name="Riley D.R."/>
            <person name="Sebastian Y."/>
            <person name="Mou S."/>
            <person name="Achtman M."/>
            <person name="Lindler L.E."/>
            <person name="Ravel J."/>
        </authorList>
    </citation>
    <scope>NUCLEOTIDE SEQUENCE [LARGE SCALE GENOMIC DNA]</scope>
    <source>
        <strain>Angola</strain>
    </source>
</reference>
<feature type="signal peptide" evidence="1">
    <location>
        <begin position="1"/>
        <end position="23"/>
    </location>
</feature>
<feature type="chain" id="PRO_0000354963" description="Catalase-peroxidase">
    <location>
        <begin position="24"/>
        <end position="737"/>
    </location>
</feature>
<feature type="active site" description="Proton acceptor" evidence="1">
    <location>
        <position position="103"/>
    </location>
</feature>
<feature type="binding site" description="axial binding residue" evidence="1">
    <location>
        <position position="264"/>
    </location>
    <ligand>
        <name>heme b</name>
        <dbReference type="ChEBI" id="CHEBI:60344"/>
    </ligand>
    <ligandPart>
        <name>Fe</name>
        <dbReference type="ChEBI" id="CHEBI:18248"/>
    </ligandPart>
</feature>
<feature type="site" description="Transition state stabilizer" evidence="1">
    <location>
        <position position="99"/>
    </location>
</feature>
<feature type="cross-link" description="Tryptophyl-tyrosyl-methioninium (Trp-Tyr) (with M-249)" evidence="1">
    <location>
        <begin position="102"/>
        <end position="223"/>
    </location>
</feature>
<feature type="cross-link" description="Tryptophyl-tyrosyl-methioninium (Tyr-Met) (with W-102)" evidence="1">
    <location>
        <begin position="223"/>
        <end position="249"/>
    </location>
</feature>
<sequence>MLKKILPVLITLAIVHNTPTAWAAEAPKTDSFYLPKSLDLSPLRLHNIESNPYGKDFNYAQQFKTLDLEAVKKDIKTVLTTSQDWWPADYGNYGPFFIRMAWHGAGTYRIYDGRGGADGGQQRFEPLNSWPDNANLDKARRLLWPIKKKYGAKISWGDLMVLTGNVALESMGFKTLGFAGGREDDWQSDLVYWGAGNKMLSDNRDKNGKLPKPLAATQMGLIYVNPEGPNGKPDPVAAAKDIREAFARMAMNDEETVALIAGGHTFGKAHGAASPEKCLGAAPGEAGLEQQGLGWANKCGSGNGKDTITSGLEGAWTTDPTHFTMQYLSNLYKHEWVLTKSPAGAWQWKPKNAANVVPDATDPTKFHPLMMFTTDIALKVDPEYKKITTRFLENPEEFKMAFARAWFKLTHRDMGPAARYLGDEVPKETFIWQDPLPAANYKMIDSADISELKDKILKTGLSDTKLIKTAWASASTFRGTDFRGGDNGARIRLAPQKDWPVNDPAELHSVLAALMEVQNNFNKDRSDGKKVSLSDLIVLGGNAAIEDAAKKAGYSISIPFTPGRTDASQEETDVSSFAVLEPTADGFRNYYDAKRNTLSPIASLIDRANKLELTVPEMTVLIGGLRVLDVNSGGSKAGVLTNTPGQLNNNFFVNLLDMSTKWTKSPKAEGYFDGYDRKTGKLKWTASSVDLVFGSNPELRAVAEVYASDDAKEKFVHDFTKVWEKVMNLDRFDIKNN</sequence>
<gene>
    <name evidence="1" type="primary">katG</name>
    <name type="ordered locus">YpAngola_A0916</name>
</gene>
<protein>
    <recommendedName>
        <fullName evidence="1">Catalase-peroxidase</fullName>
        <shortName evidence="1">CP</shortName>
        <ecNumber evidence="1">1.11.1.21</ecNumber>
    </recommendedName>
    <alternativeName>
        <fullName evidence="1">Peroxidase/catalase</fullName>
    </alternativeName>
</protein>
<organism>
    <name type="scientific">Yersinia pestis bv. Antiqua (strain Angola)</name>
    <dbReference type="NCBI Taxonomy" id="349746"/>
    <lineage>
        <taxon>Bacteria</taxon>
        <taxon>Pseudomonadati</taxon>
        <taxon>Pseudomonadota</taxon>
        <taxon>Gammaproteobacteria</taxon>
        <taxon>Enterobacterales</taxon>
        <taxon>Yersiniaceae</taxon>
        <taxon>Yersinia</taxon>
    </lineage>
</organism>
<dbReference type="EC" id="1.11.1.21" evidence="1"/>
<dbReference type="EMBL" id="CP000901">
    <property type="protein sequence ID" value="ABX86765.1"/>
    <property type="molecule type" value="Genomic_DNA"/>
</dbReference>
<dbReference type="RefSeq" id="WP_002209433.1">
    <property type="nucleotide sequence ID" value="NZ_CP009935.1"/>
</dbReference>
<dbReference type="SMR" id="A9R0X4"/>
<dbReference type="GeneID" id="57975390"/>
<dbReference type="KEGG" id="ypg:YpAngola_A0916"/>
<dbReference type="PATRIC" id="fig|349746.12.peg.1866"/>
<dbReference type="GO" id="GO:0005829">
    <property type="term" value="C:cytosol"/>
    <property type="evidence" value="ECO:0007669"/>
    <property type="project" value="TreeGrafter"/>
</dbReference>
<dbReference type="GO" id="GO:0004096">
    <property type="term" value="F:catalase activity"/>
    <property type="evidence" value="ECO:0007669"/>
    <property type="project" value="UniProtKB-UniRule"/>
</dbReference>
<dbReference type="GO" id="GO:0020037">
    <property type="term" value="F:heme binding"/>
    <property type="evidence" value="ECO:0007669"/>
    <property type="project" value="InterPro"/>
</dbReference>
<dbReference type="GO" id="GO:0046872">
    <property type="term" value="F:metal ion binding"/>
    <property type="evidence" value="ECO:0007669"/>
    <property type="project" value="UniProtKB-KW"/>
</dbReference>
<dbReference type="GO" id="GO:0070301">
    <property type="term" value="P:cellular response to hydrogen peroxide"/>
    <property type="evidence" value="ECO:0007669"/>
    <property type="project" value="TreeGrafter"/>
</dbReference>
<dbReference type="GO" id="GO:0042744">
    <property type="term" value="P:hydrogen peroxide catabolic process"/>
    <property type="evidence" value="ECO:0007669"/>
    <property type="project" value="UniProtKB-KW"/>
</dbReference>
<dbReference type="CDD" id="cd00649">
    <property type="entry name" value="catalase_peroxidase_1"/>
    <property type="match status" value="1"/>
</dbReference>
<dbReference type="CDD" id="cd08200">
    <property type="entry name" value="catalase_peroxidase_2"/>
    <property type="match status" value="1"/>
</dbReference>
<dbReference type="FunFam" id="1.10.420.10:FF:000002">
    <property type="entry name" value="Catalase-peroxidase"/>
    <property type="match status" value="1"/>
</dbReference>
<dbReference type="FunFam" id="1.10.420.10:FF:000004">
    <property type="entry name" value="Catalase-peroxidase"/>
    <property type="match status" value="1"/>
</dbReference>
<dbReference type="FunFam" id="1.10.520.10:FF:000002">
    <property type="entry name" value="Catalase-peroxidase"/>
    <property type="match status" value="1"/>
</dbReference>
<dbReference type="Gene3D" id="1.10.520.10">
    <property type="match status" value="2"/>
</dbReference>
<dbReference type="Gene3D" id="1.10.420.10">
    <property type="entry name" value="Peroxidase, domain 2"/>
    <property type="match status" value="2"/>
</dbReference>
<dbReference type="HAMAP" id="MF_01961">
    <property type="entry name" value="Catal_peroxid"/>
    <property type="match status" value="1"/>
</dbReference>
<dbReference type="InterPro" id="IPR000763">
    <property type="entry name" value="Catalase_peroxidase"/>
</dbReference>
<dbReference type="InterPro" id="IPR002016">
    <property type="entry name" value="Haem_peroxidase"/>
</dbReference>
<dbReference type="InterPro" id="IPR010255">
    <property type="entry name" value="Haem_peroxidase_sf"/>
</dbReference>
<dbReference type="InterPro" id="IPR019794">
    <property type="entry name" value="Peroxidases_AS"/>
</dbReference>
<dbReference type="InterPro" id="IPR019793">
    <property type="entry name" value="Peroxidases_heam-ligand_BS"/>
</dbReference>
<dbReference type="NCBIfam" id="TIGR00198">
    <property type="entry name" value="cat_per_HPI"/>
    <property type="match status" value="1"/>
</dbReference>
<dbReference type="NCBIfam" id="NF011635">
    <property type="entry name" value="PRK15061.1"/>
    <property type="match status" value="1"/>
</dbReference>
<dbReference type="PANTHER" id="PTHR30555:SF0">
    <property type="entry name" value="CATALASE-PEROXIDASE"/>
    <property type="match status" value="1"/>
</dbReference>
<dbReference type="PANTHER" id="PTHR30555">
    <property type="entry name" value="HYDROPEROXIDASE I, BIFUNCTIONAL CATALASE-PEROXIDASE"/>
    <property type="match status" value="1"/>
</dbReference>
<dbReference type="Pfam" id="PF00141">
    <property type="entry name" value="peroxidase"/>
    <property type="match status" value="2"/>
</dbReference>
<dbReference type="PRINTS" id="PR00460">
    <property type="entry name" value="BPEROXIDASE"/>
</dbReference>
<dbReference type="PRINTS" id="PR00458">
    <property type="entry name" value="PEROXIDASE"/>
</dbReference>
<dbReference type="SUPFAM" id="SSF48113">
    <property type="entry name" value="Heme-dependent peroxidases"/>
    <property type="match status" value="2"/>
</dbReference>
<dbReference type="PROSITE" id="PS00435">
    <property type="entry name" value="PEROXIDASE_1"/>
    <property type="match status" value="1"/>
</dbReference>
<dbReference type="PROSITE" id="PS00436">
    <property type="entry name" value="PEROXIDASE_2"/>
    <property type="match status" value="1"/>
</dbReference>
<dbReference type="PROSITE" id="PS50873">
    <property type="entry name" value="PEROXIDASE_4"/>
    <property type="match status" value="1"/>
</dbReference>
<evidence type="ECO:0000255" key="1">
    <source>
        <dbReference type="HAMAP-Rule" id="MF_01961"/>
    </source>
</evidence>
<keyword id="KW-0349">Heme</keyword>
<keyword id="KW-0376">Hydrogen peroxide</keyword>
<keyword id="KW-0408">Iron</keyword>
<keyword id="KW-0479">Metal-binding</keyword>
<keyword id="KW-0560">Oxidoreductase</keyword>
<keyword id="KW-0575">Peroxidase</keyword>
<keyword id="KW-0732">Signal</keyword>
<accession>A9R0X4</accession>
<comment type="function">
    <text evidence="1">Bifunctional enzyme with both catalase and broad-spectrum peroxidase activity.</text>
</comment>
<comment type="catalytic activity">
    <reaction evidence="1">
        <text>H2O2 + AH2 = A + 2 H2O</text>
        <dbReference type="Rhea" id="RHEA:30275"/>
        <dbReference type="ChEBI" id="CHEBI:13193"/>
        <dbReference type="ChEBI" id="CHEBI:15377"/>
        <dbReference type="ChEBI" id="CHEBI:16240"/>
        <dbReference type="ChEBI" id="CHEBI:17499"/>
        <dbReference type="EC" id="1.11.1.21"/>
    </reaction>
</comment>
<comment type="catalytic activity">
    <reaction evidence="1">
        <text>2 H2O2 = O2 + 2 H2O</text>
        <dbReference type="Rhea" id="RHEA:20309"/>
        <dbReference type="ChEBI" id="CHEBI:15377"/>
        <dbReference type="ChEBI" id="CHEBI:15379"/>
        <dbReference type="ChEBI" id="CHEBI:16240"/>
        <dbReference type="EC" id="1.11.1.21"/>
    </reaction>
</comment>
<comment type="cofactor">
    <cofactor evidence="1">
        <name>heme b</name>
        <dbReference type="ChEBI" id="CHEBI:60344"/>
    </cofactor>
    <text evidence="1">Binds 1 heme b (iron(II)-protoporphyrin IX) group per dimer.</text>
</comment>
<comment type="subunit">
    <text evidence="1">Homodimer or homotetramer.</text>
</comment>
<comment type="PTM">
    <text evidence="1">Formation of the three residue Trp-Tyr-Met cross-link is important for the catalase, but not the peroxidase activity of the enzyme.</text>
</comment>
<comment type="similarity">
    <text evidence="1">Belongs to the peroxidase family. Peroxidase/catalase subfamily.</text>
</comment>